<proteinExistence type="inferred from homology"/>
<protein>
    <recommendedName>
        <fullName evidence="1">Deoxyguanosinetriphosphate triphosphohydrolase-like protein</fullName>
    </recommendedName>
</protein>
<gene>
    <name type="ordered locus">RF_0110</name>
</gene>
<comment type="similarity">
    <text evidence="1">Belongs to the dGTPase family. Type 2 subfamily.</text>
</comment>
<keyword id="KW-0378">Hydrolase</keyword>
<feature type="chain" id="PRO_0000272408" description="Deoxyguanosinetriphosphate triphosphohydrolase-like protein">
    <location>
        <begin position="1"/>
        <end position="383"/>
    </location>
</feature>
<feature type="domain" description="HD" evidence="2">
    <location>
        <begin position="62"/>
        <end position="198"/>
    </location>
</feature>
<accession>Q4UN97</accession>
<name>DGTL1_RICFE</name>
<evidence type="ECO:0000255" key="1">
    <source>
        <dbReference type="HAMAP-Rule" id="MF_01212"/>
    </source>
</evidence>
<evidence type="ECO:0000255" key="2">
    <source>
        <dbReference type="PROSITE-ProRule" id="PRU01175"/>
    </source>
</evidence>
<organism>
    <name type="scientific">Rickettsia felis (strain ATCC VR-1525 / URRWXCal2)</name>
    <name type="common">Rickettsia azadi</name>
    <dbReference type="NCBI Taxonomy" id="315456"/>
    <lineage>
        <taxon>Bacteria</taxon>
        <taxon>Pseudomonadati</taxon>
        <taxon>Pseudomonadota</taxon>
        <taxon>Alphaproteobacteria</taxon>
        <taxon>Rickettsiales</taxon>
        <taxon>Rickettsiaceae</taxon>
        <taxon>Rickettsieae</taxon>
        <taxon>Rickettsia</taxon>
        <taxon>spotted fever group</taxon>
    </lineage>
</organism>
<sequence>MLASYASDPLKSRGRLYKELPTSYRNEFERDRDRIIHTNAFRRLQYKTQVFINHEGDHYRNRLTHSLEVSTVARSVANTLNLSSDLAETIALAHDLGHTPFGHAGERALNECMKEYNGFSHNAQSLKILTLLEKRYAAYNGVNLTWEVLEGIVKHNGPITDEINEYIAEYNKQNDLELSTYASAEAQIAALADDISYISHDLEDSIGAKIIDFNSLAELKYIDQHVFEIKTKFKNISSSCLIYEVVRKLIHELITDLLWQTKENLNKEKITNIDEIRNLNYQIVDFTEKTNERIKETKKFLHERVYKSNKITAISLKCTKIVQGLFKVYMDDINLLPVNWKMLIDSNETYSKARIIADYIAGMTDRFAIQEYNQLCSLNFNNI</sequence>
<dbReference type="EMBL" id="CP000053">
    <property type="protein sequence ID" value="AAY60961.1"/>
    <property type="molecule type" value="Genomic_DNA"/>
</dbReference>
<dbReference type="SMR" id="Q4UN97"/>
<dbReference type="STRING" id="315456.RF_0110"/>
<dbReference type="KEGG" id="rfe:RF_0110"/>
<dbReference type="eggNOG" id="COG0232">
    <property type="taxonomic scope" value="Bacteria"/>
</dbReference>
<dbReference type="HOGENOM" id="CLU_028163_1_0_5"/>
<dbReference type="OrthoDB" id="9803619at2"/>
<dbReference type="Proteomes" id="UP000008548">
    <property type="component" value="Chromosome"/>
</dbReference>
<dbReference type="GO" id="GO:0008832">
    <property type="term" value="F:dGTPase activity"/>
    <property type="evidence" value="ECO:0007669"/>
    <property type="project" value="TreeGrafter"/>
</dbReference>
<dbReference type="GO" id="GO:0006203">
    <property type="term" value="P:dGTP catabolic process"/>
    <property type="evidence" value="ECO:0007669"/>
    <property type="project" value="TreeGrafter"/>
</dbReference>
<dbReference type="CDD" id="cd00077">
    <property type="entry name" value="HDc"/>
    <property type="match status" value="1"/>
</dbReference>
<dbReference type="Gene3D" id="1.10.3210.10">
    <property type="entry name" value="Hypothetical protein af1432"/>
    <property type="match status" value="1"/>
</dbReference>
<dbReference type="HAMAP" id="MF_01212">
    <property type="entry name" value="dGTPase_type2"/>
    <property type="match status" value="1"/>
</dbReference>
<dbReference type="InterPro" id="IPR006261">
    <property type="entry name" value="dGTPase"/>
</dbReference>
<dbReference type="InterPro" id="IPR050135">
    <property type="entry name" value="dGTPase-like"/>
</dbReference>
<dbReference type="InterPro" id="IPR023023">
    <property type="entry name" value="dNTPase_2"/>
</dbReference>
<dbReference type="InterPro" id="IPR003607">
    <property type="entry name" value="HD/PDEase_dom"/>
</dbReference>
<dbReference type="InterPro" id="IPR006674">
    <property type="entry name" value="HD_domain"/>
</dbReference>
<dbReference type="InterPro" id="IPR026875">
    <property type="entry name" value="PHydrolase_assoc_dom"/>
</dbReference>
<dbReference type="NCBIfam" id="TIGR01353">
    <property type="entry name" value="dGTP_triPase"/>
    <property type="match status" value="1"/>
</dbReference>
<dbReference type="NCBIfam" id="NF002326">
    <property type="entry name" value="PRK01286.1-1"/>
    <property type="match status" value="1"/>
</dbReference>
<dbReference type="NCBIfam" id="NF002330">
    <property type="entry name" value="PRK01286.1-5"/>
    <property type="match status" value="1"/>
</dbReference>
<dbReference type="PANTHER" id="PTHR11373:SF43">
    <property type="entry name" value="DEOXYGUANOSINETRIPHOSPHATE TRIPHOSPHOHYDROLASE-LIKE PROTEIN"/>
    <property type="match status" value="1"/>
</dbReference>
<dbReference type="PANTHER" id="PTHR11373">
    <property type="entry name" value="DEOXYNUCLEOSIDE TRIPHOSPHATE TRIPHOSPHOHYDROLASE"/>
    <property type="match status" value="1"/>
</dbReference>
<dbReference type="Pfam" id="PF01966">
    <property type="entry name" value="HD"/>
    <property type="match status" value="1"/>
</dbReference>
<dbReference type="Pfam" id="PF13286">
    <property type="entry name" value="HD_assoc"/>
    <property type="match status" value="1"/>
</dbReference>
<dbReference type="SMART" id="SM00471">
    <property type="entry name" value="HDc"/>
    <property type="match status" value="1"/>
</dbReference>
<dbReference type="SUPFAM" id="SSF109604">
    <property type="entry name" value="HD-domain/PDEase-like"/>
    <property type="match status" value="1"/>
</dbReference>
<dbReference type="PROSITE" id="PS51831">
    <property type="entry name" value="HD"/>
    <property type="match status" value="1"/>
</dbReference>
<reference key="1">
    <citation type="journal article" date="2005" name="PLoS Biol.">
        <title>The genome sequence of Rickettsia felis identifies the first putative conjugative plasmid in an obligate intracellular parasite.</title>
        <authorList>
            <person name="Ogata H."/>
            <person name="Renesto P."/>
            <person name="Audic S."/>
            <person name="Robert C."/>
            <person name="Blanc G."/>
            <person name="Fournier P.-E."/>
            <person name="Parinello H."/>
            <person name="Claverie J.-M."/>
            <person name="Raoult D."/>
        </authorList>
    </citation>
    <scope>NUCLEOTIDE SEQUENCE [LARGE SCALE GENOMIC DNA]</scope>
    <source>
        <strain>ATCC VR-1525 / URRWXCal2</strain>
    </source>
</reference>